<proteinExistence type="inferred from homology"/>
<feature type="chain" id="PRO_1000091173" description="D-alanine--D-alanine ligase">
    <location>
        <begin position="1"/>
        <end position="301"/>
    </location>
</feature>
<feature type="domain" description="ATP-grasp" evidence="2">
    <location>
        <begin position="99"/>
        <end position="294"/>
    </location>
</feature>
<feature type="binding site" evidence="2">
    <location>
        <begin position="126"/>
        <end position="181"/>
    </location>
    <ligand>
        <name>ATP</name>
        <dbReference type="ChEBI" id="CHEBI:30616"/>
    </ligand>
</feature>
<feature type="binding site" evidence="2">
    <location>
        <position position="248"/>
    </location>
    <ligand>
        <name>Mg(2+)</name>
        <dbReference type="ChEBI" id="CHEBI:18420"/>
        <label>1</label>
    </ligand>
</feature>
<feature type="binding site" evidence="2">
    <location>
        <position position="261"/>
    </location>
    <ligand>
        <name>Mg(2+)</name>
        <dbReference type="ChEBI" id="CHEBI:18420"/>
        <label>1</label>
    </ligand>
</feature>
<feature type="binding site" evidence="2">
    <location>
        <position position="261"/>
    </location>
    <ligand>
        <name>Mg(2+)</name>
        <dbReference type="ChEBI" id="CHEBI:18420"/>
        <label>2</label>
    </ligand>
</feature>
<feature type="binding site" evidence="2">
    <location>
        <position position="263"/>
    </location>
    <ligand>
        <name>Mg(2+)</name>
        <dbReference type="ChEBI" id="CHEBI:18420"/>
        <label>2</label>
    </ligand>
</feature>
<evidence type="ECO:0000250" key="1"/>
<evidence type="ECO:0000255" key="2">
    <source>
        <dbReference type="HAMAP-Rule" id="MF_00047"/>
    </source>
</evidence>
<comment type="function">
    <text evidence="2">Cell wall formation.</text>
</comment>
<comment type="catalytic activity">
    <reaction evidence="2">
        <text>2 D-alanine + ATP = D-alanyl-D-alanine + ADP + phosphate + H(+)</text>
        <dbReference type="Rhea" id="RHEA:11224"/>
        <dbReference type="ChEBI" id="CHEBI:15378"/>
        <dbReference type="ChEBI" id="CHEBI:30616"/>
        <dbReference type="ChEBI" id="CHEBI:43474"/>
        <dbReference type="ChEBI" id="CHEBI:57416"/>
        <dbReference type="ChEBI" id="CHEBI:57822"/>
        <dbReference type="ChEBI" id="CHEBI:456216"/>
        <dbReference type="EC" id="6.3.2.4"/>
    </reaction>
</comment>
<comment type="cofactor">
    <cofactor evidence="1">
        <name>Mg(2+)</name>
        <dbReference type="ChEBI" id="CHEBI:18420"/>
    </cofactor>
    <cofactor evidence="1">
        <name>Mn(2+)</name>
        <dbReference type="ChEBI" id="CHEBI:29035"/>
    </cofactor>
    <text evidence="1">Binds 2 magnesium or manganese ions per subunit.</text>
</comment>
<comment type="pathway">
    <text evidence="2">Cell wall biogenesis; peptidoglycan biosynthesis.</text>
</comment>
<comment type="subcellular location">
    <subcellularLocation>
        <location evidence="2">Cytoplasm</location>
    </subcellularLocation>
</comment>
<comment type="similarity">
    <text evidence="2">Belongs to the D-alanine--D-alanine ligase family.</text>
</comment>
<accession>B2UY33</accession>
<sequence>MKVGVIMGGISSEREISLKSGKSIVDSINKNKYEVVSIVIDEKEDIINKVKGIDFALLALHGQFGEDGTVQSVLQTLGIPYSGCGPLSSSMCMDKDISKCILKAANIRTAPWINLRKNDAINYEEIEKMGYPVVVKPTHGGSSVATFIIKEEKDIKDAVIEGFKWDSEVIIEKFIKGDEITCPVFGDKMLPVVAIKPKAEFFDFTAKYADGGSDEFVTELPKKLHEEVEKMALATYKALKCEVYSRVDMIVTEDKVPYILEVNTLPGMTPNSLIPKSAAGVNISFPELIDMIIDESMKVIR</sequence>
<gene>
    <name evidence="2" type="primary">ddl</name>
    <name type="ordered locus">CLH_2823</name>
</gene>
<organism>
    <name type="scientific">Clostridium botulinum (strain Alaska E43 / Type E3)</name>
    <dbReference type="NCBI Taxonomy" id="508767"/>
    <lineage>
        <taxon>Bacteria</taxon>
        <taxon>Bacillati</taxon>
        <taxon>Bacillota</taxon>
        <taxon>Clostridia</taxon>
        <taxon>Eubacteriales</taxon>
        <taxon>Clostridiaceae</taxon>
        <taxon>Clostridium</taxon>
    </lineage>
</organism>
<reference key="1">
    <citation type="submission" date="2008-05" db="EMBL/GenBank/DDBJ databases">
        <title>Complete genome sequence of Clostridium botulinum E3 str. Alaska E43.</title>
        <authorList>
            <person name="Brinkac L.M."/>
            <person name="Brown J.L."/>
            <person name="Bruce D."/>
            <person name="Detter C."/>
            <person name="Munk C."/>
            <person name="Smith L.A."/>
            <person name="Smith T.J."/>
            <person name="Sutton G."/>
            <person name="Brettin T.S."/>
        </authorList>
    </citation>
    <scope>NUCLEOTIDE SEQUENCE [LARGE SCALE GENOMIC DNA]</scope>
    <source>
        <strain>Alaska E43 / Type E3</strain>
    </source>
</reference>
<dbReference type="EC" id="6.3.2.4" evidence="2"/>
<dbReference type="EMBL" id="CP001078">
    <property type="protein sequence ID" value="ACD53784.1"/>
    <property type="molecule type" value="Genomic_DNA"/>
</dbReference>
<dbReference type="RefSeq" id="WP_012451617.1">
    <property type="nucleotide sequence ID" value="NC_010723.1"/>
</dbReference>
<dbReference type="SMR" id="B2UY33"/>
<dbReference type="KEGG" id="cbt:CLH_2823"/>
<dbReference type="HOGENOM" id="CLU_039268_1_1_9"/>
<dbReference type="UniPathway" id="UPA00219"/>
<dbReference type="GO" id="GO:0005737">
    <property type="term" value="C:cytoplasm"/>
    <property type="evidence" value="ECO:0007669"/>
    <property type="project" value="UniProtKB-SubCell"/>
</dbReference>
<dbReference type="GO" id="GO:0005524">
    <property type="term" value="F:ATP binding"/>
    <property type="evidence" value="ECO:0007669"/>
    <property type="project" value="UniProtKB-KW"/>
</dbReference>
<dbReference type="GO" id="GO:0008716">
    <property type="term" value="F:D-alanine-D-alanine ligase activity"/>
    <property type="evidence" value="ECO:0007669"/>
    <property type="project" value="UniProtKB-UniRule"/>
</dbReference>
<dbReference type="GO" id="GO:0046872">
    <property type="term" value="F:metal ion binding"/>
    <property type="evidence" value="ECO:0007669"/>
    <property type="project" value="UniProtKB-KW"/>
</dbReference>
<dbReference type="GO" id="GO:0071555">
    <property type="term" value="P:cell wall organization"/>
    <property type="evidence" value="ECO:0007669"/>
    <property type="project" value="UniProtKB-KW"/>
</dbReference>
<dbReference type="GO" id="GO:0009252">
    <property type="term" value="P:peptidoglycan biosynthetic process"/>
    <property type="evidence" value="ECO:0007669"/>
    <property type="project" value="UniProtKB-UniRule"/>
</dbReference>
<dbReference type="GO" id="GO:0008360">
    <property type="term" value="P:regulation of cell shape"/>
    <property type="evidence" value="ECO:0007669"/>
    <property type="project" value="UniProtKB-KW"/>
</dbReference>
<dbReference type="FunFam" id="3.40.50.20:FF:000031">
    <property type="entry name" value="D-alanine--D-alanine ligase"/>
    <property type="match status" value="1"/>
</dbReference>
<dbReference type="Gene3D" id="3.40.50.20">
    <property type="match status" value="1"/>
</dbReference>
<dbReference type="Gene3D" id="3.30.1490.20">
    <property type="entry name" value="ATP-grasp fold, A domain"/>
    <property type="match status" value="1"/>
</dbReference>
<dbReference type="Gene3D" id="3.30.470.20">
    <property type="entry name" value="ATP-grasp fold, B domain"/>
    <property type="match status" value="1"/>
</dbReference>
<dbReference type="HAMAP" id="MF_00047">
    <property type="entry name" value="Dala_Dala_lig"/>
    <property type="match status" value="1"/>
</dbReference>
<dbReference type="InterPro" id="IPR011761">
    <property type="entry name" value="ATP-grasp"/>
</dbReference>
<dbReference type="InterPro" id="IPR013815">
    <property type="entry name" value="ATP_grasp_subdomain_1"/>
</dbReference>
<dbReference type="InterPro" id="IPR000291">
    <property type="entry name" value="D-Ala_lig_Van_CS"/>
</dbReference>
<dbReference type="InterPro" id="IPR005905">
    <property type="entry name" value="D_ala_D_ala"/>
</dbReference>
<dbReference type="InterPro" id="IPR011095">
    <property type="entry name" value="Dala_Dala_lig_C"/>
</dbReference>
<dbReference type="InterPro" id="IPR011127">
    <property type="entry name" value="Dala_Dala_lig_N"/>
</dbReference>
<dbReference type="InterPro" id="IPR016185">
    <property type="entry name" value="PreATP-grasp_dom_sf"/>
</dbReference>
<dbReference type="NCBIfam" id="TIGR01205">
    <property type="entry name" value="D_ala_D_alaTIGR"/>
    <property type="match status" value="1"/>
</dbReference>
<dbReference type="NCBIfam" id="NF002378">
    <property type="entry name" value="PRK01372.1"/>
    <property type="match status" value="1"/>
</dbReference>
<dbReference type="PANTHER" id="PTHR23132">
    <property type="entry name" value="D-ALANINE--D-ALANINE LIGASE"/>
    <property type="match status" value="1"/>
</dbReference>
<dbReference type="PANTHER" id="PTHR23132:SF23">
    <property type="entry name" value="D-ALANINE--D-ALANINE LIGASE B"/>
    <property type="match status" value="1"/>
</dbReference>
<dbReference type="Pfam" id="PF07478">
    <property type="entry name" value="Dala_Dala_lig_C"/>
    <property type="match status" value="1"/>
</dbReference>
<dbReference type="Pfam" id="PF01820">
    <property type="entry name" value="Dala_Dala_lig_N"/>
    <property type="match status" value="2"/>
</dbReference>
<dbReference type="PIRSF" id="PIRSF039102">
    <property type="entry name" value="Ddl/VanB"/>
    <property type="match status" value="1"/>
</dbReference>
<dbReference type="SUPFAM" id="SSF56059">
    <property type="entry name" value="Glutathione synthetase ATP-binding domain-like"/>
    <property type="match status" value="1"/>
</dbReference>
<dbReference type="SUPFAM" id="SSF52440">
    <property type="entry name" value="PreATP-grasp domain"/>
    <property type="match status" value="1"/>
</dbReference>
<dbReference type="PROSITE" id="PS50975">
    <property type="entry name" value="ATP_GRASP"/>
    <property type="match status" value="1"/>
</dbReference>
<dbReference type="PROSITE" id="PS00843">
    <property type="entry name" value="DALA_DALA_LIGASE_1"/>
    <property type="match status" value="1"/>
</dbReference>
<dbReference type="PROSITE" id="PS00844">
    <property type="entry name" value="DALA_DALA_LIGASE_2"/>
    <property type="match status" value="1"/>
</dbReference>
<protein>
    <recommendedName>
        <fullName evidence="2">D-alanine--D-alanine ligase</fullName>
        <ecNumber evidence="2">6.3.2.4</ecNumber>
    </recommendedName>
    <alternativeName>
        <fullName evidence="2">D-Ala-D-Ala ligase</fullName>
    </alternativeName>
    <alternativeName>
        <fullName evidence="2">D-alanylalanine synthetase</fullName>
    </alternativeName>
</protein>
<name>DDL_CLOBA</name>
<keyword id="KW-0067">ATP-binding</keyword>
<keyword id="KW-0133">Cell shape</keyword>
<keyword id="KW-0961">Cell wall biogenesis/degradation</keyword>
<keyword id="KW-0963">Cytoplasm</keyword>
<keyword id="KW-0436">Ligase</keyword>
<keyword id="KW-0460">Magnesium</keyword>
<keyword id="KW-0464">Manganese</keyword>
<keyword id="KW-0479">Metal-binding</keyword>
<keyword id="KW-0547">Nucleotide-binding</keyword>
<keyword id="KW-0573">Peptidoglycan synthesis</keyword>